<feature type="chain" id="PRO_1000019302" description="Ferrochelatase">
    <location>
        <begin position="1"/>
        <end position="333"/>
    </location>
</feature>
<feature type="binding site" evidence="1">
    <location>
        <position position="202"/>
    </location>
    <ligand>
        <name>Fe cation</name>
        <dbReference type="ChEBI" id="CHEBI:24875"/>
    </ligand>
</feature>
<feature type="binding site" evidence="1">
    <location>
        <position position="284"/>
    </location>
    <ligand>
        <name>Fe cation</name>
        <dbReference type="ChEBI" id="CHEBI:24875"/>
    </ligand>
</feature>
<sequence>MQQYSSKYNKQAILLANLGTPDNYDTKSIKRYLKEFLSDPRVIEANPVLWKIILNLIILPIRAKKNVHTYKTVWNKQHNKSPLLFYTENLADKLDKKLDNYIVDYAMRYGNPSIESKIKNLQDQGATEIIIFPLYPQYSATTTATVYDEVYRVLSKLRWQPTIKGINPYYDNKFHIQTISQQIKEHLKKLDSTPDTVLFSFHGLPKEYFDKGDPYYCHCHKTYRLVKEELQNEYPNIDFELSFQSRFGPKKWLEPYTTVKLEEFAKQNKSVVVIAPGFSADCLETLEELAISEKENFIKKGGKEFSLIPCLNDSNQHVDMLYNIINEEICLKK</sequence>
<reference key="1">
    <citation type="journal article" date="2007" name="Genome Biol.">
        <title>Comparison of Francisella tularensis genomes reveals evolutionary events associated with the emergence of human pathogenic strains.</title>
        <authorList>
            <person name="Rohmer L."/>
            <person name="Fong C."/>
            <person name="Abmayr S."/>
            <person name="Wasnick M."/>
            <person name="Larson Freeman T.J."/>
            <person name="Radey M."/>
            <person name="Guina T."/>
            <person name="Svensson K."/>
            <person name="Hayden H.S."/>
            <person name="Jacobs M."/>
            <person name="Gallagher L.A."/>
            <person name="Manoil C."/>
            <person name="Ernst R.K."/>
            <person name="Drees B."/>
            <person name="Buckley D."/>
            <person name="Haugen E."/>
            <person name="Bovee D."/>
            <person name="Zhou Y."/>
            <person name="Chang J."/>
            <person name="Levy R."/>
            <person name="Lim R."/>
            <person name="Gillett W."/>
            <person name="Guenthener D."/>
            <person name="Kang A."/>
            <person name="Shaffer S.A."/>
            <person name="Taylor G."/>
            <person name="Chen J."/>
            <person name="Gallis B."/>
            <person name="D'Argenio D.A."/>
            <person name="Forsman M."/>
            <person name="Olson M.V."/>
            <person name="Goodlett D.R."/>
            <person name="Kaul R."/>
            <person name="Miller S.I."/>
            <person name="Brittnacher M.J."/>
        </authorList>
    </citation>
    <scope>NUCLEOTIDE SEQUENCE [LARGE SCALE GENOMIC DNA]</scope>
    <source>
        <strain>U112</strain>
    </source>
</reference>
<keyword id="KW-0963">Cytoplasm</keyword>
<keyword id="KW-0350">Heme biosynthesis</keyword>
<keyword id="KW-0408">Iron</keyword>
<keyword id="KW-0456">Lyase</keyword>
<keyword id="KW-0479">Metal-binding</keyword>
<keyword id="KW-0627">Porphyrin biosynthesis</keyword>
<comment type="function">
    <text evidence="1">Catalyzes the ferrous insertion into protoporphyrin IX.</text>
</comment>
<comment type="catalytic activity">
    <reaction evidence="1">
        <text>heme b + 2 H(+) = protoporphyrin IX + Fe(2+)</text>
        <dbReference type="Rhea" id="RHEA:22584"/>
        <dbReference type="ChEBI" id="CHEBI:15378"/>
        <dbReference type="ChEBI" id="CHEBI:29033"/>
        <dbReference type="ChEBI" id="CHEBI:57306"/>
        <dbReference type="ChEBI" id="CHEBI:60344"/>
        <dbReference type="EC" id="4.98.1.1"/>
    </reaction>
</comment>
<comment type="pathway">
    <text evidence="1">Porphyrin-containing compound metabolism; protoheme biosynthesis; protoheme from protoporphyrin-IX: step 1/1.</text>
</comment>
<comment type="subcellular location">
    <subcellularLocation>
        <location evidence="1">Cytoplasm</location>
    </subcellularLocation>
</comment>
<comment type="similarity">
    <text evidence="1">Belongs to the ferrochelatase family.</text>
</comment>
<evidence type="ECO:0000255" key="1">
    <source>
        <dbReference type="HAMAP-Rule" id="MF_00323"/>
    </source>
</evidence>
<protein>
    <recommendedName>
        <fullName evidence="1">Ferrochelatase</fullName>
        <ecNumber evidence="1">4.98.1.1</ecNumber>
    </recommendedName>
    <alternativeName>
        <fullName evidence="1">Heme synthase</fullName>
    </alternativeName>
    <alternativeName>
        <fullName evidence="1">Protoheme ferro-lyase</fullName>
    </alternativeName>
</protein>
<gene>
    <name evidence="1" type="primary">hemH</name>
    <name type="ordered locus">FTN_1120</name>
</gene>
<accession>A0Q6Z1</accession>
<organism>
    <name type="scientific">Francisella tularensis subsp. novicida (strain U112)</name>
    <dbReference type="NCBI Taxonomy" id="401614"/>
    <lineage>
        <taxon>Bacteria</taxon>
        <taxon>Pseudomonadati</taxon>
        <taxon>Pseudomonadota</taxon>
        <taxon>Gammaproteobacteria</taxon>
        <taxon>Thiotrichales</taxon>
        <taxon>Francisellaceae</taxon>
        <taxon>Francisella</taxon>
    </lineage>
</organism>
<dbReference type="EC" id="4.98.1.1" evidence="1"/>
<dbReference type="EMBL" id="CP000439">
    <property type="protein sequence ID" value="ABK90006.1"/>
    <property type="molecule type" value="Genomic_DNA"/>
</dbReference>
<dbReference type="RefSeq" id="WP_003039759.1">
    <property type="nucleotide sequence ID" value="NC_008601.1"/>
</dbReference>
<dbReference type="SMR" id="A0Q6Z1"/>
<dbReference type="KEGG" id="ftn:FTN_1120"/>
<dbReference type="KEGG" id="ftx:AW25_888"/>
<dbReference type="BioCyc" id="FTUL401614:G1G75-1162-MONOMER"/>
<dbReference type="UniPathway" id="UPA00252">
    <property type="reaction ID" value="UER00325"/>
</dbReference>
<dbReference type="Proteomes" id="UP000000762">
    <property type="component" value="Chromosome"/>
</dbReference>
<dbReference type="GO" id="GO:0005737">
    <property type="term" value="C:cytoplasm"/>
    <property type="evidence" value="ECO:0007669"/>
    <property type="project" value="UniProtKB-SubCell"/>
</dbReference>
<dbReference type="GO" id="GO:0004325">
    <property type="term" value="F:ferrochelatase activity"/>
    <property type="evidence" value="ECO:0007669"/>
    <property type="project" value="UniProtKB-UniRule"/>
</dbReference>
<dbReference type="GO" id="GO:0046872">
    <property type="term" value="F:metal ion binding"/>
    <property type="evidence" value="ECO:0007669"/>
    <property type="project" value="UniProtKB-KW"/>
</dbReference>
<dbReference type="GO" id="GO:0006783">
    <property type="term" value="P:heme biosynthetic process"/>
    <property type="evidence" value="ECO:0007669"/>
    <property type="project" value="UniProtKB-UniRule"/>
</dbReference>
<dbReference type="CDD" id="cd00419">
    <property type="entry name" value="Ferrochelatase_C"/>
    <property type="match status" value="1"/>
</dbReference>
<dbReference type="CDD" id="cd03411">
    <property type="entry name" value="Ferrochelatase_N"/>
    <property type="match status" value="1"/>
</dbReference>
<dbReference type="FunFam" id="3.40.50.1400:FF:000002">
    <property type="entry name" value="Ferrochelatase"/>
    <property type="match status" value="1"/>
</dbReference>
<dbReference type="Gene3D" id="3.40.50.1400">
    <property type="match status" value="2"/>
</dbReference>
<dbReference type="HAMAP" id="MF_00323">
    <property type="entry name" value="Ferrochelatase"/>
    <property type="match status" value="1"/>
</dbReference>
<dbReference type="InterPro" id="IPR001015">
    <property type="entry name" value="Ferrochelatase"/>
</dbReference>
<dbReference type="InterPro" id="IPR019772">
    <property type="entry name" value="Ferrochelatase_AS"/>
</dbReference>
<dbReference type="InterPro" id="IPR033644">
    <property type="entry name" value="Ferrochelatase_C"/>
</dbReference>
<dbReference type="InterPro" id="IPR033659">
    <property type="entry name" value="Ferrochelatase_N"/>
</dbReference>
<dbReference type="NCBIfam" id="TIGR00109">
    <property type="entry name" value="hemH"/>
    <property type="match status" value="1"/>
</dbReference>
<dbReference type="PANTHER" id="PTHR11108">
    <property type="entry name" value="FERROCHELATASE"/>
    <property type="match status" value="1"/>
</dbReference>
<dbReference type="PANTHER" id="PTHR11108:SF1">
    <property type="entry name" value="FERROCHELATASE, MITOCHONDRIAL"/>
    <property type="match status" value="1"/>
</dbReference>
<dbReference type="Pfam" id="PF00762">
    <property type="entry name" value="Ferrochelatase"/>
    <property type="match status" value="1"/>
</dbReference>
<dbReference type="SUPFAM" id="SSF53800">
    <property type="entry name" value="Chelatase"/>
    <property type="match status" value="1"/>
</dbReference>
<dbReference type="PROSITE" id="PS00534">
    <property type="entry name" value="FERROCHELATASE"/>
    <property type="match status" value="1"/>
</dbReference>
<proteinExistence type="inferred from homology"/>
<name>HEMH_FRATN</name>